<accession>B2GAU0</accession>
<proteinExistence type="inferred from homology"/>
<keyword id="KW-0066">ATP synthesis</keyword>
<keyword id="KW-1003">Cell membrane</keyword>
<keyword id="KW-0138">CF(0)</keyword>
<keyword id="KW-0375">Hydrogen ion transport</keyword>
<keyword id="KW-0406">Ion transport</keyword>
<keyword id="KW-0446">Lipid-binding</keyword>
<keyword id="KW-0472">Membrane</keyword>
<keyword id="KW-1185">Reference proteome</keyword>
<keyword id="KW-0812">Transmembrane</keyword>
<keyword id="KW-1133">Transmembrane helix</keyword>
<keyword id="KW-0813">Transport</keyword>
<dbReference type="EMBL" id="AP008937">
    <property type="protein sequence ID" value="BAG26772.1"/>
    <property type="molecule type" value="Genomic_DNA"/>
</dbReference>
<dbReference type="RefSeq" id="WP_003682741.1">
    <property type="nucleotide sequence ID" value="NC_010610.1"/>
</dbReference>
<dbReference type="SMR" id="B2GAU0"/>
<dbReference type="GeneID" id="83715236"/>
<dbReference type="KEGG" id="lfe:LAF_0436"/>
<dbReference type="eggNOG" id="COG0636">
    <property type="taxonomic scope" value="Bacteria"/>
</dbReference>
<dbReference type="HOGENOM" id="CLU_148047_1_1_9"/>
<dbReference type="Proteomes" id="UP000001697">
    <property type="component" value="Chromosome"/>
</dbReference>
<dbReference type="GO" id="GO:0005886">
    <property type="term" value="C:plasma membrane"/>
    <property type="evidence" value="ECO:0007669"/>
    <property type="project" value="UniProtKB-SubCell"/>
</dbReference>
<dbReference type="GO" id="GO:0045259">
    <property type="term" value="C:proton-transporting ATP synthase complex"/>
    <property type="evidence" value="ECO:0007669"/>
    <property type="project" value="UniProtKB-KW"/>
</dbReference>
<dbReference type="GO" id="GO:0033177">
    <property type="term" value="C:proton-transporting two-sector ATPase complex, proton-transporting domain"/>
    <property type="evidence" value="ECO:0007669"/>
    <property type="project" value="InterPro"/>
</dbReference>
<dbReference type="GO" id="GO:0008289">
    <property type="term" value="F:lipid binding"/>
    <property type="evidence" value="ECO:0007669"/>
    <property type="project" value="UniProtKB-KW"/>
</dbReference>
<dbReference type="GO" id="GO:0046933">
    <property type="term" value="F:proton-transporting ATP synthase activity, rotational mechanism"/>
    <property type="evidence" value="ECO:0007669"/>
    <property type="project" value="UniProtKB-UniRule"/>
</dbReference>
<dbReference type="CDD" id="cd18185">
    <property type="entry name" value="ATP-synt_Fo_c_ATPE"/>
    <property type="match status" value="1"/>
</dbReference>
<dbReference type="FunFam" id="1.20.20.10:FF:000004">
    <property type="entry name" value="ATP synthase subunit c"/>
    <property type="match status" value="1"/>
</dbReference>
<dbReference type="Gene3D" id="1.20.20.10">
    <property type="entry name" value="F1F0 ATP synthase subunit C"/>
    <property type="match status" value="1"/>
</dbReference>
<dbReference type="HAMAP" id="MF_01396">
    <property type="entry name" value="ATP_synth_c_bact"/>
    <property type="match status" value="1"/>
</dbReference>
<dbReference type="InterPro" id="IPR005953">
    <property type="entry name" value="ATP_synth_csu_bac/chlpt"/>
</dbReference>
<dbReference type="InterPro" id="IPR000454">
    <property type="entry name" value="ATP_synth_F0_csu"/>
</dbReference>
<dbReference type="InterPro" id="IPR020537">
    <property type="entry name" value="ATP_synth_F0_csu_DDCD_BS"/>
</dbReference>
<dbReference type="InterPro" id="IPR038662">
    <property type="entry name" value="ATP_synth_F0_csu_sf"/>
</dbReference>
<dbReference type="InterPro" id="IPR002379">
    <property type="entry name" value="ATPase_proteolipid_c-like_dom"/>
</dbReference>
<dbReference type="InterPro" id="IPR035921">
    <property type="entry name" value="F/V-ATP_Csub_sf"/>
</dbReference>
<dbReference type="NCBIfam" id="TIGR01260">
    <property type="entry name" value="ATP_synt_c"/>
    <property type="match status" value="1"/>
</dbReference>
<dbReference type="NCBIfam" id="NF005363">
    <property type="entry name" value="PRK06876.1"/>
    <property type="match status" value="1"/>
</dbReference>
<dbReference type="PANTHER" id="PTHR10031">
    <property type="entry name" value="ATP SYNTHASE LIPID-BINDING PROTEIN, MITOCHONDRIAL"/>
    <property type="match status" value="1"/>
</dbReference>
<dbReference type="PANTHER" id="PTHR10031:SF0">
    <property type="entry name" value="ATPASE PROTEIN 9"/>
    <property type="match status" value="1"/>
</dbReference>
<dbReference type="Pfam" id="PF00137">
    <property type="entry name" value="ATP-synt_C"/>
    <property type="match status" value="1"/>
</dbReference>
<dbReference type="PRINTS" id="PR00124">
    <property type="entry name" value="ATPASEC"/>
</dbReference>
<dbReference type="SUPFAM" id="SSF81333">
    <property type="entry name" value="F1F0 ATP synthase subunit C"/>
    <property type="match status" value="1"/>
</dbReference>
<dbReference type="PROSITE" id="PS00605">
    <property type="entry name" value="ATPASE_C"/>
    <property type="match status" value="1"/>
</dbReference>
<name>ATPL_LIMF3</name>
<protein>
    <recommendedName>
        <fullName evidence="1">ATP synthase subunit c</fullName>
    </recommendedName>
    <alternativeName>
        <fullName evidence="1">ATP synthase F(0) sector subunit c</fullName>
    </alternativeName>
    <alternativeName>
        <fullName evidence="1">F-type ATPase subunit c</fullName>
        <shortName evidence="1">F-ATPase subunit c</shortName>
    </alternativeName>
    <alternativeName>
        <fullName evidence="1">Lipid-binding protein</fullName>
    </alternativeName>
</protein>
<feature type="chain" id="PRO_1000184404" description="ATP synthase subunit c">
    <location>
        <begin position="1"/>
        <end position="70"/>
    </location>
</feature>
<feature type="transmembrane region" description="Helical" evidence="1">
    <location>
        <begin position="4"/>
        <end position="24"/>
    </location>
</feature>
<feature type="transmembrane region" description="Helical" evidence="1">
    <location>
        <begin position="47"/>
        <end position="67"/>
    </location>
</feature>
<feature type="site" description="Reversibly protonated during proton transport" evidence="1">
    <location>
        <position position="54"/>
    </location>
</feature>
<reference key="1">
    <citation type="journal article" date="2008" name="DNA Res.">
        <title>Comparative genome analysis of Lactobacillus reuteri and Lactobacillus fermentum reveal a genomic island for reuterin and cobalamin production.</title>
        <authorList>
            <person name="Morita H."/>
            <person name="Toh H."/>
            <person name="Fukuda S."/>
            <person name="Horikawa H."/>
            <person name="Oshima K."/>
            <person name="Suzuki T."/>
            <person name="Murakami M."/>
            <person name="Hisamatsu S."/>
            <person name="Kato Y."/>
            <person name="Takizawa T."/>
            <person name="Fukuoka H."/>
            <person name="Yoshimura T."/>
            <person name="Itoh K."/>
            <person name="O'Sullivan D.J."/>
            <person name="McKay L.L."/>
            <person name="Ohno H."/>
            <person name="Kikuchi J."/>
            <person name="Masaoka T."/>
            <person name="Hattori M."/>
        </authorList>
    </citation>
    <scope>NUCLEOTIDE SEQUENCE [LARGE SCALE GENOMIC DNA]</scope>
    <source>
        <strain>NBRC 3956 / LMG 18251</strain>
    </source>
</reference>
<sequence>MGAIAAGIAAGLAAVGAGVGNGLVIGHTLDGMARQPEMSGQLRGTMFLGVGLIEALPILSIVIAFLVMNK</sequence>
<evidence type="ECO:0000255" key="1">
    <source>
        <dbReference type="HAMAP-Rule" id="MF_01396"/>
    </source>
</evidence>
<comment type="function">
    <text evidence="1">F(1)F(0) ATP synthase produces ATP from ADP in the presence of a proton or sodium gradient. F-type ATPases consist of two structural domains, F(1) containing the extramembraneous catalytic core and F(0) containing the membrane proton channel, linked together by a central stalk and a peripheral stalk. During catalysis, ATP synthesis in the catalytic domain of F(1) is coupled via a rotary mechanism of the central stalk subunits to proton translocation.</text>
</comment>
<comment type="function">
    <text evidence="1">Key component of the F(0) channel; it plays a direct role in translocation across the membrane. A homomeric c-ring of between 10-14 subunits forms the central stalk rotor element with the F(1) delta and epsilon subunits.</text>
</comment>
<comment type="subunit">
    <text evidence="1">F-type ATPases have 2 components, F(1) - the catalytic core - and F(0) - the membrane proton channel. F(1) has five subunits: alpha(3), beta(3), gamma(1), delta(1), epsilon(1). F(0) has three main subunits: a(1), b(2) and c(10-14). The alpha and beta chains form an alternating ring which encloses part of the gamma chain. F(1) is attached to F(0) by a central stalk formed by the gamma and epsilon chains, while a peripheral stalk is formed by the delta and b chains.</text>
</comment>
<comment type="subcellular location">
    <subcellularLocation>
        <location evidence="1">Cell membrane</location>
        <topology evidence="1">Multi-pass membrane protein</topology>
    </subcellularLocation>
</comment>
<comment type="similarity">
    <text evidence="1">Belongs to the ATPase C chain family.</text>
</comment>
<gene>
    <name evidence="1" type="primary">atpE</name>
    <name type="ordered locus">LAF_0436</name>
</gene>
<organism>
    <name type="scientific">Limosilactobacillus fermentum (strain NBRC 3956 / LMG 18251)</name>
    <name type="common">Lactobacillus fermentum</name>
    <dbReference type="NCBI Taxonomy" id="334390"/>
    <lineage>
        <taxon>Bacteria</taxon>
        <taxon>Bacillati</taxon>
        <taxon>Bacillota</taxon>
        <taxon>Bacilli</taxon>
        <taxon>Lactobacillales</taxon>
        <taxon>Lactobacillaceae</taxon>
        <taxon>Limosilactobacillus</taxon>
    </lineage>
</organism>